<name>PEPT_BACAA</name>
<evidence type="ECO:0000255" key="1">
    <source>
        <dbReference type="HAMAP-Rule" id="MF_00550"/>
    </source>
</evidence>
<feature type="chain" id="PRO_1000200881" description="Peptidase T">
    <location>
        <begin position="1"/>
        <end position="410"/>
    </location>
</feature>
<feature type="active site" evidence="1">
    <location>
        <position position="81"/>
    </location>
</feature>
<feature type="active site" description="Proton acceptor" evidence="1">
    <location>
        <position position="176"/>
    </location>
</feature>
<feature type="binding site" evidence="1">
    <location>
        <position position="79"/>
    </location>
    <ligand>
        <name>Zn(2+)</name>
        <dbReference type="ChEBI" id="CHEBI:29105"/>
        <label>1</label>
    </ligand>
</feature>
<feature type="binding site" evidence="1">
    <location>
        <position position="142"/>
    </location>
    <ligand>
        <name>Zn(2+)</name>
        <dbReference type="ChEBI" id="CHEBI:29105"/>
        <label>1</label>
    </ligand>
</feature>
<feature type="binding site" evidence="1">
    <location>
        <position position="142"/>
    </location>
    <ligand>
        <name>Zn(2+)</name>
        <dbReference type="ChEBI" id="CHEBI:29105"/>
        <label>2</label>
    </ligand>
</feature>
<feature type="binding site" evidence="1">
    <location>
        <position position="177"/>
    </location>
    <ligand>
        <name>Zn(2+)</name>
        <dbReference type="ChEBI" id="CHEBI:29105"/>
        <label>2</label>
    </ligand>
</feature>
<feature type="binding site" evidence="1">
    <location>
        <position position="199"/>
    </location>
    <ligand>
        <name>Zn(2+)</name>
        <dbReference type="ChEBI" id="CHEBI:29105"/>
        <label>1</label>
    </ligand>
</feature>
<feature type="binding site" evidence="1">
    <location>
        <position position="381"/>
    </location>
    <ligand>
        <name>Zn(2+)</name>
        <dbReference type="ChEBI" id="CHEBI:29105"/>
        <label>2</label>
    </ligand>
</feature>
<dbReference type="EC" id="3.4.11.4" evidence="1"/>
<dbReference type="EMBL" id="CP001598">
    <property type="protein sequence ID" value="ACQ49626.1"/>
    <property type="molecule type" value="Genomic_DNA"/>
</dbReference>
<dbReference type="RefSeq" id="WP_000656974.1">
    <property type="nucleotide sequence ID" value="NC_012659.1"/>
</dbReference>
<dbReference type="SMR" id="C3P5E3"/>
<dbReference type="MEROPS" id="M20.003"/>
<dbReference type="GeneID" id="45023569"/>
<dbReference type="KEGG" id="bai:BAA_3897"/>
<dbReference type="HOGENOM" id="CLU_053676_0_0_9"/>
<dbReference type="GO" id="GO:0005829">
    <property type="term" value="C:cytosol"/>
    <property type="evidence" value="ECO:0007669"/>
    <property type="project" value="TreeGrafter"/>
</dbReference>
<dbReference type="GO" id="GO:0008237">
    <property type="term" value="F:metallopeptidase activity"/>
    <property type="evidence" value="ECO:0007669"/>
    <property type="project" value="UniProtKB-KW"/>
</dbReference>
<dbReference type="GO" id="GO:0045148">
    <property type="term" value="F:tripeptide aminopeptidase activity"/>
    <property type="evidence" value="ECO:0007669"/>
    <property type="project" value="UniProtKB-UniRule"/>
</dbReference>
<dbReference type="GO" id="GO:0008270">
    <property type="term" value="F:zinc ion binding"/>
    <property type="evidence" value="ECO:0007669"/>
    <property type="project" value="UniProtKB-UniRule"/>
</dbReference>
<dbReference type="GO" id="GO:0043171">
    <property type="term" value="P:peptide catabolic process"/>
    <property type="evidence" value="ECO:0007669"/>
    <property type="project" value="UniProtKB-UniRule"/>
</dbReference>
<dbReference type="GO" id="GO:0006508">
    <property type="term" value="P:proteolysis"/>
    <property type="evidence" value="ECO:0007669"/>
    <property type="project" value="UniProtKB-UniRule"/>
</dbReference>
<dbReference type="CDD" id="cd03892">
    <property type="entry name" value="M20_peptT"/>
    <property type="match status" value="1"/>
</dbReference>
<dbReference type="FunFam" id="3.30.70.360:FF:000002">
    <property type="entry name" value="Peptidase T"/>
    <property type="match status" value="1"/>
</dbReference>
<dbReference type="Gene3D" id="3.30.70.360">
    <property type="match status" value="1"/>
</dbReference>
<dbReference type="Gene3D" id="3.40.630.10">
    <property type="entry name" value="Zn peptidases"/>
    <property type="match status" value="1"/>
</dbReference>
<dbReference type="HAMAP" id="MF_00550">
    <property type="entry name" value="Aminopeptidase_M20"/>
    <property type="match status" value="1"/>
</dbReference>
<dbReference type="InterPro" id="IPR001261">
    <property type="entry name" value="ArgE/DapE_CS"/>
</dbReference>
<dbReference type="InterPro" id="IPR036264">
    <property type="entry name" value="Bact_exopeptidase_dim_dom"/>
</dbReference>
<dbReference type="InterPro" id="IPR002933">
    <property type="entry name" value="Peptidase_M20"/>
</dbReference>
<dbReference type="InterPro" id="IPR011650">
    <property type="entry name" value="Peptidase_M20_dimer"/>
</dbReference>
<dbReference type="InterPro" id="IPR010161">
    <property type="entry name" value="Peptidase_M20B"/>
</dbReference>
<dbReference type="NCBIfam" id="TIGR01882">
    <property type="entry name" value="peptidase-T"/>
    <property type="match status" value="1"/>
</dbReference>
<dbReference type="NCBIfam" id="NF003976">
    <property type="entry name" value="PRK05469.1"/>
    <property type="match status" value="1"/>
</dbReference>
<dbReference type="NCBIfam" id="NF009920">
    <property type="entry name" value="PRK13381.1"/>
    <property type="match status" value="1"/>
</dbReference>
<dbReference type="PANTHER" id="PTHR42994">
    <property type="entry name" value="PEPTIDASE T"/>
    <property type="match status" value="1"/>
</dbReference>
<dbReference type="PANTHER" id="PTHR42994:SF1">
    <property type="entry name" value="PEPTIDASE T"/>
    <property type="match status" value="1"/>
</dbReference>
<dbReference type="Pfam" id="PF07687">
    <property type="entry name" value="M20_dimer"/>
    <property type="match status" value="1"/>
</dbReference>
<dbReference type="Pfam" id="PF01546">
    <property type="entry name" value="Peptidase_M20"/>
    <property type="match status" value="1"/>
</dbReference>
<dbReference type="PIRSF" id="PIRSF037215">
    <property type="entry name" value="Peptidase_M20B"/>
    <property type="match status" value="1"/>
</dbReference>
<dbReference type="SUPFAM" id="SSF55031">
    <property type="entry name" value="Bacterial exopeptidase dimerisation domain"/>
    <property type="match status" value="1"/>
</dbReference>
<dbReference type="SUPFAM" id="SSF53187">
    <property type="entry name" value="Zn-dependent exopeptidases"/>
    <property type="match status" value="1"/>
</dbReference>
<dbReference type="PROSITE" id="PS00758">
    <property type="entry name" value="ARGE_DAPE_CPG2_1"/>
    <property type="match status" value="1"/>
</dbReference>
<dbReference type="PROSITE" id="PS00759">
    <property type="entry name" value="ARGE_DAPE_CPG2_2"/>
    <property type="match status" value="1"/>
</dbReference>
<proteinExistence type="inferred from homology"/>
<organism>
    <name type="scientific">Bacillus anthracis (strain A0248)</name>
    <dbReference type="NCBI Taxonomy" id="592021"/>
    <lineage>
        <taxon>Bacteria</taxon>
        <taxon>Bacillati</taxon>
        <taxon>Bacillota</taxon>
        <taxon>Bacilli</taxon>
        <taxon>Bacillales</taxon>
        <taxon>Bacillaceae</taxon>
        <taxon>Bacillus</taxon>
        <taxon>Bacillus cereus group</taxon>
    </lineage>
</organism>
<sequence>MKEELIERFTRYVKIDTQSNEDSHTVPTTPGQIEFGKLLVEELKEVGLTEVTMDDNGYVMATLPANTDKDVPVIGFLAHLDTATDFTGKNVKPQIHENFDGNAITLNEELNIVLTPEQFPELPSYKGHTIITTDGTTLLGADDKAGLTEIMVAMNYLIHNPQIKHGKIRVAFTPDEEIGRGPAHFDVEAFGASFAYMMDGGPLGGLEYESFNAAGAKLTFNGTNTHPGTAKNKMRNATKLAMEFNGHLPVEEAPEYTEGYEGFYHLLSLNGDVEQSKAYYIIRDFDRKNFEARKNTIENIVKQMQEKYGQDAVVLEMNDQYYNMLEKIEPVREIVDIAYEAMKSLNIEPNIHPIRGGTDGSQLSYMGLPTPNIFTGGENYHGKFEYVSVDVMEKAVQVIIEIARRFEEQA</sequence>
<keyword id="KW-0031">Aminopeptidase</keyword>
<keyword id="KW-0963">Cytoplasm</keyword>
<keyword id="KW-0378">Hydrolase</keyword>
<keyword id="KW-0479">Metal-binding</keyword>
<keyword id="KW-0482">Metalloprotease</keyword>
<keyword id="KW-0645">Protease</keyword>
<keyword id="KW-0862">Zinc</keyword>
<comment type="function">
    <text evidence="1">Cleaves the N-terminal amino acid of tripeptides.</text>
</comment>
<comment type="catalytic activity">
    <reaction evidence="1">
        <text>Release of the N-terminal residue from a tripeptide.</text>
        <dbReference type="EC" id="3.4.11.4"/>
    </reaction>
</comment>
<comment type="cofactor">
    <cofactor evidence="1">
        <name>Zn(2+)</name>
        <dbReference type="ChEBI" id="CHEBI:29105"/>
    </cofactor>
    <text evidence="1">Binds 2 Zn(2+) ions per subunit.</text>
</comment>
<comment type="subcellular location">
    <subcellularLocation>
        <location evidence="1">Cytoplasm</location>
    </subcellularLocation>
</comment>
<comment type="similarity">
    <text evidence="1">Belongs to the peptidase M20B family.</text>
</comment>
<gene>
    <name evidence="1" type="primary">pepT</name>
    <name type="ordered locus">BAA_3897</name>
</gene>
<accession>C3P5E3</accession>
<reference key="1">
    <citation type="submission" date="2009-04" db="EMBL/GenBank/DDBJ databases">
        <title>Genome sequence of Bacillus anthracis A0248.</title>
        <authorList>
            <person name="Dodson R.J."/>
            <person name="Munk A.C."/>
            <person name="Bruce D."/>
            <person name="Detter C."/>
            <person name="Tapia R."/>
            <person name="Sutton G."/>
            <person name="Sims D."/>
            <person name="Brettin T."/>
        </authorList>
    </citation>
    <scope>NUCLEOTIDE SEQUENCE [LARGE SCALE GENOMIC DNA]</scope>
    <source>
        <strain>A0248</strain>
    </source>
</reference>
<protein>
    <recommendedName>
        <fullName evidence="1">Peptidase T</fullName>
        <ecNumber evidence="1">3.4.11.4</ecNumber>
    </recommendedName>
    <alternativeName>
        <fullName evidence="1">Aminotripeptidase</fullName>
        <shortName evidence="1">Tripeptidase</shortName>
    </alternativeName>
    <alternativeName>
        <fullName evidence="1">Tripeptide aminopeptidase</fullName>
    </alternativeName>
</protein>